<organism>
    <name type="scientific">Macaca nemestrina</name>
    <name type="common">Pig-tailed macaque</name>
    <dbReference type="NCBI Taxonomy" id="9545"/>
    <lineage>
        <taxon>Eukaryota</taxon>
        <taxon>Metazoa</taxon>
        <taxon>Chordata</taxon>
        <taxon>Craniata</taxon>
        <taxon>Vertebrata</taxon>
        <taxon>Euteleostomi</taxon>
        <taxon>Mammalia</taxon>
        <taxon>Eutheria</taxon>
        <taxon>Euarchontoglires</taxon>
        <taxon>Primates</taxon>
        <taxon>Haplorrhini</taxon>
        <taxon>Catarrhini</taxon>
        <taxon>Cercopithecidae</taxon>
        <taxon>Cercopithecinae</taxon>
        <taxon>Macaca</taxon>
    </lineage>
</organism>
<evidence type="ECO:0000250" key="1">
    <source>
        <dbReference type="UniProtKB" id="P02654"/>
    </source>
</evidence>
<evidence type="ECO:0000250" key="2">
    <source>
        <dbReference type="UniProtKB" id="P18657"/>
    </source>
</evidence>
<evidence type="ECO:0000250" key="3">
    <source>
        <dbReference type="UniProtKB" id="P33047"/>
    </source>
</evidence>
<evidence type="ECO:0000250" key="4">
    <source>
        <dbReference type="UniProtKB" id="P34929"/>
    </source>
</evidence>
<evidence type="ECO:0000250" key="5">
    <source>
        <dbReference type="UniProtKB" id="P86336"/>
    </source>
</evidence>
<evidence type="ECO:0000255" key="6"/>
<evidence type="ECO:0000305" key="7"/>
<sequence>MRLFLSLPVLVVVLSMVLEGPAPAQGAPDVSSALDKLKEFGNTLEDKAWEVINRIKQSEFPAKTRDWFSETFRKVKEKLKINS</sequence>
<protein>
    <recommendedName>
        <fullName>Apolipoprotein C-I, basic form</fullName>
        <shortName>Apo-CIB</shortName>
        <shortName>ApoC-IB</shortName>
    </recommendedName>
    <alternativeName>
        <fullName>Apolipoprotein C1B</fullName>
    </alternativeName>
    <component>
        <recommendedName>
            <fullName>Cholesteryl ester transfer inhibitor protein</fullName>
            <shortName>CETIP</shortName>
        </recommendedName>
    </component>
    <component>
        <recommendedName>
            <fullName>Truncated apolipoprotein C-I, basic form</fullName>
            <shortName>Apo-CIB'</shortName>
            <shortName>ApoC-IB'</shortName>
        </recommendedName>
    </component>
</protein>
<reference key="1">
    <citation type="unpublished observations" date="2016-05">
        <authorList>
            <person name="Puppione D.L."/>
        </authorList>
    </citation>
    <scope>IDENTIFICATION</scope>
</reference>
<feature type="signal peptide" evidence="6">
    <location>
        <begin position="1"/>
        <end position="26"/>
    </location>
</feature>
<feature type="chain" id="PRO_0000436805" description="Apolipoprotein C-I, basic form">
    <location>
        <begin position="27"/>
        <end position="83"/>
    </location>
</feature>
<feature type="chain" id="PRO_0000436806" description="Cholesteryl ester transfer inhibitor protein" evidence="4">
    <location>
        <begin position="27"/>
        <end position="64"/>
    </location>
</feature>
<feature type="chain" id="PRO_0000436807" description="Truncated apolipoprotein C-I, basic form" evidence="5">
    <location>
        <begin position="29"/>
        <end position="83"/>
    </location>
</feature>
<comment type="function">
    <text evidence="1 3">Inhibitor of lipoprotein binding to the low density lipoprotein (LDL) receptor, LDL receptor-related protein, and very low density lipoprotein (VLDL) receptor. Associates with high density lipoproteins (HDL) and the triacylglycerol-rich lipoproteins in the plasma and makes up about 10% of the protein of the VLDL and 2% of that of HDL. Appears to interfere directly with fatty acid uptake and is also the major plasma inhibitor of cholesteryl ester transfer protein (CETP). Binds free fatty acids and reduces their intracellular esterification. Modulates the interaction of APOE with beta-migrating VLDL and inhibits binding of beta-VLDL to the LDL receptor-related protein.</text>
</comment>
<comment type="subcellular location">
    <subcellularLocation>
        <location evidence="1">Secreted</location>
    </subcellularLocation>
</comment>
<comment type="miscellaneous">
    <text evidence="2">Apolipoprotein C-I is present in acidic (APOC1A) and basic (APOC1B) forms in P.paniscus, P.abelii and P.troglodytes and perhaps also in baboons and macaques. The two genes for ApoC-I arose through a duplication process that occurred after the divergence of New World monkeys from the human lineage. In human, the acidic form has become a pseudogene sometime between the divergence of bonobos and chimpanzees from the human lineage and the appearance of the Denisovans. Pseudogenization resulted when the codon for the penultimate amino acid in the signal sequence was changed to a stop codon.</text>
</comment>
<comment type="similarity">
    <text evidence="7">Belongs to the apolipoprotein C1 family.</text>
</comment>
<keyword id="KW-0445">Lipid transport</keyword>
<keyword id="KW-1185">Reference proteome</keyword>
<keyword id="KW-0964">Secreted</keyword>
<keyword id="KW-0732">Signal</keyword>
<keyword id="KW-0813">Transport</keyword>
<accession>P0DOA2</accession>
<gene>
    <name type="primary">APOC1B</name>
    <name type="synonym">APOC1</name>
</gene>
<name>APO1B_MACNE</name>
<proteinExistence type="inferred from homology"/>
<dbReference type="SMR" id="P0DOA2"/>
<dbReference type="STRING" id="9545.ENSMNEP00000008334"/>
<dbReference type="Ensembl" id="ENSMNET00000032493.1">
    <property type="protein sequence ID" value="ENSMNEP00000008326.1"/>
    <property type="gene ID" value="ENSMNEG00000028685.1"/>
</dbReference>
<dbReference type="GeneID" id="105478522"/>
<dbReference type="KEGG" id="mni:105478522"/>
<dbReference type="GeneTree" id="ENSGT00390000011584"/>
<dbReference type="OMA" id="GTSTRNW"/>
<dbReference type="OrthoDB" id="14429at314294"/>
<dbReference type="Proteomes" id="UP000233120">
    <property type="component" value="Unassembled WGS sequence"/>
</dbReference>
<dbReference type="Bgee" id="ENSMNEG00000028685">
    <property type="expression patterns" value="Expressed in liver and 12 other cell types or tissues"/>
</dbReference>
<dbReference type="GO" id="GO:0034364">
    <property type="term" value="C:high-density lipoprotein particle"/>
    <property type="evidence" value="ECO:0007669"/>
    <property type="project" value="TreeGrafter"/>
</dbReference>
<dbReference type="GO" id="GO:0034361">
    <property type="term" value="C:very-low-density lipoprotein particle"/>
    <property type="evidence" value="ECO:0007669"/>
    <property type="project" value="TreeGrafter"/>
</dbReference>
<dbReference type="GO" id="GO:0005504">
    <property type="term" value="F:fatty acid binding"/>
    <property type="evidence" value="ECO:0007669"/>
    <property type="project" value="TreeGrafter"/>
</dbReference>
<dbReference type="GO" id="GO:0004859">
    <property type="term" value="F:phospholipase inhibitor activity"/>
    <property type="evidence" value="ECO:0007669"/>
    <property type="project" value="TreeGrafter"/>
</dbReference>
<dbReference type="GO" id="GO:0006869">
    <property type="term" value="P:lipid transport"/>
    <property type="evidence" value="ECO:0007669"/>
    <property type="project" value="UniProtKB-KW"/>
</dbReference>
<dbReference type="GO" id="GO:0042157">
    <property type="term" value="P:lipoprotein metabolic process"/>
    <property type="evidence" value="ECO:0007669"/>
    <property type="project" value="InterPro"/>
</dbReference>
<dbReference type="GO" id="GO:0032375">
    <property type="term" value="P:negative regulation of cholesterol transport"/>
    <property type="evidence" value="ECO:0007669"/>
    <property type="project" value="TreeGrafter"/>
</dbReference>
<dbReference type="GO" id="GO:0050995">
    <property type="term" value="P:negative regulation of lipid catabolic process"/>
    <property type="evidence" value="ECO:0007669"/>
    <property type="project" value="TreeGrafter"/>
</dbReference>
<dbReference type="GO" id="GO:0010916">
    <property type="term" value="P:negative regulation of very-low-density lipoprotein particle clearance"/>
    <property type="evidence" value="ECO:0007669"/>
    <property type="project" value="TreeGrafter"/>
</dbReference>
<dbReference type="GO" id="GO:0006641">
    <property type="term" value="P:triglyceride metabolic process"/>
    <property type="evidence" value="ECO:0007669"/>
    <property type="project" value="TreeGrafter"/>
</dbReference>
<dbReference type="GO" id="GO:0034447">
    <property type="term" value="P:very-low-density lipoprotein particle clearance"/>
    <property type="evidence" value="ECO:0007669"/>
    <property type="project" value="TreeGrafter"/>
</dbReference>
<dbReference type="Gene3D" id="4.10.260.30">
    <property type="entry name" value="Apolipoprotein C-I"/>
    <property type="match status" value="1"/>
</dbReference>
<dbReference type="InterPro" id="IPR043081">
    <property type="entry name" value="ApoC-1_sf"/>
</dbReference>
<dbReference type="InterPro" id="IPR006781">
    <property type="entry name" value="ApoC-I"/>
</dbReference>
<dbReference type="PANTHER" id="PTHR16565">
    <property type="entry name" value="APOLIPOPROTEIN C-I"/>
    <property type="match status" value="1"/>
</dbReference>
<dbReference type="PANTHER" id="PTHR16565:SF2">
    <property type="entry name" value="APOLIPOPROTEIN C-I"/>
    <property type="match status" value="1"/>
</dbReference>
<dbReference type="Pfam" id="PF04691">
    <property type="entry name" value="ApoC-I"/>
    <property type="match status" value="1"/>
</dbReference>